<reference key="1">
    <citation type="journal article" date="2003" name="Nature">
        <title>The genome sequence of the filamentous fungus Neurospora crassa.</title>
        <authorList>
            <person name="Galagan J.E."/>
            <person name="Calvo S.E."/>
            <person name="Borkovich K.A."/>
            <person name="Selker E.U."/>
            <person name="Read N.D."/>
            <person name="Jaffe D.B."/>
            <person name="FitzHugh W."/>
            <person name="Ma L.-J."/>
            <person name="Smirnov S."/>
            <person name="Purcell S."/>
            <person name="Rehman B."/>
            <person name="Elkins T."/>
            <person name="Engels R."/>
            <person name="Wang S."/>
            <person name="Nielsen C.B."/>
            <person name="Butler J."/>
            <person name="Endrizzi M."/>
            <person name="Qui D."/>
            <person name="Ianakiev P."/>
            <person name="Bell-Pedersen D."/>
            <person name="Nelson M.A."/>
            <person name="Werner-Washburne M."/>
            <person name="Selitrennikoff C.P."/>
            <person name="Kinsey J.A."/>
            <person name="Braun E.L."/>
            <person name="Zelter A."/>
            <person name="Schulte U."/>
            <person name="Kothe G.O."/>
            <person name="Jedd G."/>
            <person name="Mewes H.-W."/>
            <person name="Staben C."/>
            <person name="Marcotte E."/>
            <person name="Greenberg D."/>
            <person name="Roy A."/>
            <person name="Foley K."/>
            <person name="Naylor J."/>
            <person name="Stange-Thomann N."/>
            <person name="Barrett R."/>
            <person name="Gnerre S."/>
            <person name="Kamal M."/>
            <person name="Kamvysselis M."/>
            <person name="Mauceli E.W."/>
            <person name="Bielke C."/>
            <person name="Rudd S."/>
            <person name="Frishman D."/>
            <person name="Krystofova S."/>
            <person name="Rasmussen C."/>
            <person name="Metzenberg R.L."/>
            <person name="Perkins D.D."/>
            <person name="Kroken S."/>
            <person name="Cogoni C."/>
            <person name="Macino G."/>
            <person name="Catcheside D.E.A."/>
            <person name="Li W."/>
            <person name="Pratt R.J."/>
            <person name="Osmani S.A."/>
            <person name="DeSouza C.P.C."/>
            <person name="Glass N.L."/>
            <person name="Orbach M.J."/>
            <person name="Berglund J.A."/>
            <person name="Voelker R."/>
            <person name="Yarden O."/>
            <person name="Plamann M."/>
            <person name="Seiler S."/>
            <person name="Dunlap J.C."/>
            <person name="Radford A."/>
            <person name="Aramayo R."/>
            <person name="Natvig D.O."/>
            <person name="Alex L.A."/>
            <person name="Mannhaupt G."/>
            <person name="Ebbole D.J."/>
            <person name="Freitag M."/>
            <person name="Paulsen I."/>
            <person name="Sachs M.S."/>
            <person name="Lander E.S."/>
            <person name="Nusbaum C."/>
            <person name="Birren B.W."/>
        </authorList>
    </citation>
    <scope>NUCLEOTIDE SEQUENCE [LARGE SCALE GENOMIC DNA]</scope>
    <source>
        <strain>ATCC 24698 / 74-OR23-1A / CBS 708.71 / DSM 1257 / FGSC 987</strain>
    </source>
</reference>
<name>SNX41_NEUCR</name>
<feature type="chain" id="PRO_0000213831" description="Sorting nexin-41">
    <location>
        <begin position="1"/>
        <end position="619"/>
    </location>
</feature>
<feature type="domain" description="PX" evidence="2">
    <location>
        <begin position="108"/>
        <end position="224"/>
    </location>
</feature>
<feature type="region of interest" description="Disordered" evidence="3">
    <location>
        <begin position="1"/>
        <end position="95"/>
    </location>
</feature>
<feature type="region of interest" description="Disordered" evidence="3">
    <location>
        <begin position="444"/>
        <end position="510"/>
    </location>
</feature>
<feature type="compositionally biased region" description="Basic and acidic residues" evidence="3">
    <location>
        <begin position="454"/>
        <end position="467"/>
    </location>
</feature>
<feature type="binding site" evidence="1">
    <location>
        <position position="142"/>
    </location>
    <ligand>
        <name>a 1,2-diacyl-sn-glycero-3-phospho-(1D-myo-inositol-3-phosphate)</name>
        <dbReference type="ChEBI" id="CHEBI:58088"/>
    </ligand>
</feature>
<feature type="binding site" evidence="1">
    <location>
        <position position="144"/>
    </location>
    <ligand>
        <name>a 1,2-diacyl-sn-glycero-3-phospho-(1D-myo-inositol-3-phosphate)</name>
        <dbReference type="ChEBI" id="CHEBI:58088"/>
    </ligand>
</feature>
<feature type="binding site" evidence="1">
    <location>
        <position position="168"/>
    </location>
    <ligand>
        <name>a 1,2-diacyl-sn-glycero-3-phospho-(1D-myo-inositol-3-phosphate)</name>
        <dbReference type="ChEBI" id="CHEBI:58088"/>
    </ligand>
</feature>
<feature type="binding site" evidence="1">
    <location>
        <position position="191"/>
    </location>
    <ligand>
        <name>a 1,2-diacyl-sn-glycero-3-phospho-(1D-myo-inositol-3-phosphate)</name>
        <dbReference type="ChEBI" id="CHEBI:58088"/>
    </ligand>
</feature>
<sequence>MWNDEDNNPYGSFERRDSFASSTNPASPTARDYSIDARFPTPQDVRYDAPLTPSDAGDDEVPGPTYPREASDAATDDETDDQAHGELVPRRKPGGYDSRIEQMLYENPELPILITEAGKSQESGGRFIVYTIKTGDLTVRRRYSEFASLRDALTRLHPTLVIPPIPEKHTMADYAANPTNAKQDQQIIDLRKRMLAVFLNRCRRMEQVRTDGVWWRFLDPNSSWTEVLHSHPVSSIPKQIMKAPPLDPANPTAGHSFLPVPSSSAKLKTLPTQALDSAAAASLARFPPDANSLSEQDLDAYFIAFETSIKDLESLLTGPMEKVNRRTLNHLSSLASDLSELGARYNAFALSETAPTVSAAIERVGQAADSSYIATEELSTSLSASFAEPMRESAQFAGVVRNVLRYRILKRVQQEMTTDELNKKKALLESLERSEAEARRIDQYLSSSQQIQPPRREPPAQHRRDGSGEDTASIDSDFPPTHSDFSQAPSAKIGAPERTGGSPSHKKAASTSITNKIFGPIRHAVQGVVDVDPERTRRDTIGKTRESIVQLEQAQIASAKDVKDASASVLKDLKRFQREKEDDLKRYMLAYAKSQIEWAKKNQETWEEAKAEVNKINES</sequence>
<organism>
    <name type="scientific">Neurospora crassa (strain ATCC 24698 / 74-OR23-1A / CBS 708.71 / DSM 1257 / FGSC 987)</name>
    <dbReference type="NCBI Taxonomy" id="367110"/>
    <lineage>
        <taxon>Eukaryota</taxon>
        <taxon>Fungi</taxon>
        <taxon>Dikarya</taxon>
        <taxon>Ascomycota</taxon>
        <taxon>Pezizomycotina</taxon>
        <taxon>Sordariomycetes</taxon>
        <taxon>Sordariomycetidae</taxon>
        <taxon>Sordariales</taxon>
        <taxon>Sordariaceae</taxon>
        <taxon>Neurospora</taxon>
    </lineage>
</organism>
<protein>
    <recommendedName>
        <fullName>Sorting nexin-41</fullName>
    </recommendedName>
    <alternativeName>
        <fullName>Vacuolar sorting protein 6</fullName>
    </alternativeName>
</protein>
<gene>
    <name type="primary">vsp-6</name>
    <name type="synonym">snx41</name>
    <name type="ORF">NCU06259</name>
</gene>
<dbReference type="EMBL" id="CM002238">
    <property type="protein sequence ID" value="EAA33627.3"/>
    <property type="molecule type" value="Genomic_DNA"/>
</dbReference>
<dbReference type="RefSeq" id="XP_962863.3">
    <property type="nucleotide sequence ID" value="XM_957770.3"/>
</dbReference>
<dbReference type="FunCoup" id="Q7SB54">
    <property type="interactions" value="90"/>
</dbReference>
<dbReference type="STRING" id="367110.Q7SB54"/>
<dbReference type="PaxDb" id="5141-EFNCRP00000005976"/>
<dbReference type="EnsemblFungi" id="EAA33627">
    <property type="protein sequence ID" value="EAA33627"/>
    <property type="gene ID" value="NCU06259"/>
</dbReference>
<dbReference type="GeneID" id="3879016"/>
<dbReference type="KEGG" id="ncr:NCU06259"/>
<dbReference type="VEuPathDB" id="FungiDB:NCU06259"/>
<dbReference type="HOGENOM" id="CLU_014456_0_0_1"/>
<dbReference type="InParanoid" id="Q7SB54"/>
<dbReference type="OrthoDB" id="289314at2759"/>
<dbReference type="Proteomes" id="UP000001805">
    <property type="component" value="Chromosome 3, Linkage Group III"/>
</dbReference>
<dbReference type="GO" id="GO:0005829">
    <property type="term" value="C:cytosol"/>
    <property type="evidence" value="ECO:0007669"/>
    <property type="project" value="GOC"/>
</dbReference>
<dbReference type="GO" id="GO:0010008">
    <property type="term" value="C:endosome membrane"/>
    <property type="evidence" value="ECO:0007669"/>
    <property type="project" value="UniProtKB-SubCell"/>
</dbReference>
<dbReference type="GO" id="GO:0000407">
    <property type="term" value="C:phagophore assembly site"/>
    <property type="evidence" value="ECO:0000318"/>
    <property type="project" value="GO_Central"/>
</dbReference>
<dbReference type="GO" id="GO:0032266">
    <property type="term" value="F:phosphatidylinositol-3-phosphate binding"/>
    <property type="evidence" value="ECO:0000318"/>
    <property type="project" value="GO_Central"/>
</dbReference>
<dbReference type="GO" id="GO:0000422">
    <property type="term" value="P:autophagy of mitochondrion"/>
    <property type="evidence" value="ECO:0000318"/>
    <property type="project" value="GO_Central"/>
</dbReference>
<dbReference type="GO" id="GO:0015031">
    <property type="term" value="P:protein transport"/>
    <property type="evidence" value="ECO:0007669"/>
    <property type="project" value="UniProtKB-KW"/>
</dbReference>
<dbReference type="GO" id="GO:0061709">
    <property type="term" value="P:reticulophagy"/>
    <property type="evidence" value="ECO:0000318"/>
    <property type="project" value="GO_Central"/>
</dbReference>
<dbReference type="GO" id="GO:0042147">
    <property type="term" value="P:retrograde transport, endosome to Golgi"/>
    <property type="evidence" value="ECO:0007669"/>
    <property type="project" value="InterPro"/>
</dbReference>
<dbReference type="CDD" id="cd06867">
    <property type="entry name" value="PX_SNX41_42"/>
    <property type="match status" value="1"/>
</dbReference>
<dbReference type="Gene3D" id="1.20.1270.60">
    <property type="entry name" value="Arfaptin homology (AH) domain/BAR domain"/>
    <property type="match status" value="2"/>
</dbReference>
<dbReference type="Gene3D" id="3.30.1520.10">
    <property type="entry name" value="Phox-like domain"/>
    <property type="match status" value="1"/>
</dbReference>
<dbReference type="InterPro" id="IPR027267">
    <property type="entry name" value="AH/BAR_dom_sf"/>
</dbReference>
<dbReference type="InterPro" id="IPR001683">
    <property type="entry name" value="PX_dom"/>
</dbReference>
<dbReference type="InterPro" id="IPR036871">
    <property type="entry name" value="PX_dom_sf"/>
</dbReference>
<dbReference type="InterPro" id="IPR044106">
    <property type="entry name" value="PX_Snx41/Atg20"/>
</dbReference>
<dbReference type="InterPro" id="IPR051079">
    <property type="entry name" value="Sorting_Nexin_Autophagy"/>
</dbReference>
<dbReference type="InterPro" id="IPR015404">
    <property type="entry name" value="Vps5_C"/>
</dbReference>
<dbReference type="PANTHER" id="PTHR46979">
    <property type="entry name" value="SORTING NEXIN-41"/>
    <property type="match status" value="1"/>
</dbReference>
<dbReference type="PANTHER" id="PTHR46979:SF2">
    <property type="entry name" value="SORTING NEXIN-41"/>
    <property type="match status" value="1"/>
</dbReference>
<dbReference type="Pfam" id="PF00787">
    <property type="entry name" value="PX"/>
    <property type="match status" value="1"/>
</dbReference>
<dbReference type="Pfam" id="PF09325">
    <property type="entry name" value="Vps5"/>
    <property type="match status" value="1"/>
</dbReference>
<dbReference type="SMART" id="SM00312">
    <property type="entry name" value="PX"/>
    <property type="match status" value="1"/>
</dbReference>
<dbReference type="SUPFAM" id="SSF64268">
    <property type="entry name" value="PX domain"/>
    <property type="match status" value="1"/>
</dbReference>
<dbReference type="PROSITE" id="PS50195">
    <property type="entry name" value="PX"/>
    <property type="match status" value="1"/>
</dbReference>
<proteinExistence type="inferred from homology"/>
<accession>Q7SB54</accession>
<keyword id="KW-0072">Autophagy</keyword>
<keyword id="KW-0967">Endosome</keyword>
<keyword id="KW-0446">Lipid-binding</keyword>
<keyword id="KW-0472">Membrane</keyword>
<keyword id="KW-0653">Protein transport</keyword>
<keyword id="KW-1185">Reference proteome</keyword>
<keyword id="KW-0813">Transport</keyword>
<evidence type="ECO:0000250" key="1"/>
<evidence type="ECO:0000255" key="2">
    <source>
        <dbReference type="PROSITE-ProRule" id="PRU00147"/>
    </source>
</evidence>
<evidence type="ECO:0000256" key="3">
    <source>
        <dbReference type="SAM" id="MobiDB-lite"/>
    </source>
</evidence>
<evidence type="ECO:0000305" key="4"/>
<comment type="function">
    <text evidence="1">May be required for cytoplasm to vacuole transport (Cvt) and pexophagy.</text>
</comment>
<comment type="subcellular location">
    <subcellularLocation>
        <location evidence="1">Endosome membrane</location>
        <topology evidence="1">Peripheral membrane protein</topology>
    </subcellularLocation>
    <subcellularLocation>
        <location evidence="1">Endomembrane system</location>
        <topology evidence="1">Peripheral membrane protein</topology>
    </subcellularLocation>
    <text evidence="1">Endosome and other perivacuolar punctate structures.</text>
</comment>
<comment type="domain">
    <text evidence="1">The PX domain binds phosphatidylinositol 3-phosphate which is necessary for peripheral membrane localization to the perivacuolar punctate structures.</text>
</comment>
<comment type="similarity">
    <text evidence="4">Belongs to the sorting nexin family.</text>
</comment>